<protein>
    <recommendedName>
        <fullName>Cilia- and flagella-associated protein 20</fullName>
    </recommendedName>
    <alternativeName>
        <fullName>Basal body up-regulated protein 22</fullName>
        <shortName>Bug22p</shortName>
    </alternativeName>
    <alternativeName>
        <fullName>Flagellar-associated protein 20</fullName>
    </alternativeName>
</protein>
<reference key="1">
    <citation type="journal article" date="2007" name="Science">
        <title>The Chlamydomonas genome reveals the evolution of key animal and plant functions.</title>
        <authorList>
            <person name="Merchant S.S."/>
            <person name="Prochnik S.E."/>
            <person name="Vallon O."/>
            <person name="Harris E.H."/>
            <person name="Karpowicz S.J."/>
            <person name="Witman G.B."/>
            <person name="Terry A."/>
            <person name="Salamov A."/>
            <person name="Fritz-Laylin L.K."/>
            <person name="Marechal-Drouard L."/>
            <person name="Marshall W.F."/>
            <person name="Qu L.H."/>
            <person name="Nelson D.R."/>
            <person name="Sanderfoot A.A."/>
            <person name="Spalding M.H."/>
            <person name="Kapitonov V.V."/>
            <person name="Ren Q."/>
            <person name="Ferris P."/>
            <person name="Lindquist E."/>
            <person name="Shapiro H."/>
            <person name="Lucas S.M."/>
            <person name="Grimwood J."/>
            <person name="Schmutz J."/>
            <person name="Cardol P."/>
            <person name="Cerutti H."/>
            <person name="Chanfreau G."/>
            <person name="Chen C.L."/>
            <person name="Cognat V."/>
            <person name="Croft M.T."/>
            <person name="Dent R."/>
            <person name="Dutcher S."/>
            <person name="Fernandez E."/>
            <person name="Fukuzawa H."/>
            <person name="Gonzalez-Ballester D."/>
            <person name="Gonzalez-Halphen D."/>
            <person name="Hallmann A."/>
            <person name="Hanikenne M."/>
            <person name="Hippler M."/>
            <person name="Inwood W."/>
            <person name="Jabbari K."/>
            <person name="Kalanon M."/>
            <person name="Kuras R."/>
            <person name="Lefebvre P.A."/>
            <person name="Lemaire S.D."/>
            <person name="Lobanov A.V."/>
            <person name="Lohr M."/>
            <person name="Manuell A."/>
            <person name="Meier I."/>
            <person name="Mets L."/>
            <person name="Mittag M."/>
            <person name="Mittelmeier T."/>
            <person name="Moroney J.V."/>
            <person name="Moseley J."/>
            <person name="Napoli C."/>
            <person name="Nedelcu A.M."/>
            <person name="Niyogi K."/>
            <person name="Novoselov S.V."/>
            <person name="Paulsen I.T."/>
            <person name="Pazour G.J."/>
            <person name="Purton S."/>
            <person name="Ral J.P."/>
            <person name="Riano-Pachon D.M."/>
            <person name="Riekhof W."/>
            <person name="Rymarquis L."/>
            <person name="Schroda M."/>
            <person name="Stern D."/>
            <person name="Umen J."/>
            <person name="Willows R."/>
            <person name="Wilson N."/>
            <person name="Zimmer S.L."/>
            <person name="Allmer J."/>
            <person name="Balk J."/>
            <person name="Bisova K."/>
            <person name="Chen C.J."/>
            <person name="Elias M."/>
            <person name="Gendler K."/>
            <person name="Hauser C."/>
            <person name="Lamb M.R."/>
            <person name="Ledford H."/>
            <person name="Long J.C."/>
            <person name="Minagawa J."/>
            <person name="Page M.D."/>
            <person name="Pan J."/>
            <person name="Pootakham W."/>
            <person name="Roje S."/>
            <person name="Rose A."/>
            <person name="Stahlberg E."/>
            <person name="Terauchi A.M."/>
            <person name="Yang P."/>
            <person name="Ball S."/>
            <person name="Bowler C."/>
            <person name="Dieckmann C.L."/>
            <person name="Gladyshev V.N."/>
            <person name="Green P."/>
            <person name="Jorgensen R."/>
            <person name="Mayfield S."/>
            <person name="Mueller-Roeber B."/>
            <person name="Rajamani S."/>
            <person name="Sayre R.T."/>
            <person name="Brokstein P."/>
            <person name="Dubchak I."/>
            <person name="Goodstein D."/>
            <person name="Hornick L."/>
            <person name="Huang Y.W."/>
            <person name="Jhaveri J."/>
            <person name="Luo Y."/>
            <person name="Martinez D."/>
            <person name="Ngau W.C."/>
            <person name="Otillar B."/>
            <person name="Poliakov A."/>
            <person name="Porter A."/>
            <person name="Szajkowski L."/>
            <person name="Werner G."/>
            <person name="Zhou K."/>
            <person name="Grigoriev I.V."/>
            <person name="Rokhsar D.S."/>
            <person name="Grossman A.R."/>
        </authorList>
    </citation>
    <scope>NUCLEOTIDE SEQUENCE [LARGE SCALE GENOMIC DNA]</scope>
    <source>
        <strain>CC-503</strain>
    </source>
</reference>
<reference key="2">
    <citation type="journal article" date="2005" name="Curr. Biol.">
        <title>Proteomic analysis of isolated chlamydomonas centrioles reveals orthologs of ciliary-disease genes.</title>
        <authorList>
            <person name="Keller L.C."/>
            <person name="Romijn E.P."/>
            <person name="Zamora I."/>
            <person name="Yates J.R. III"/>
            <person name="Marshall W.F."/>
        </authorList>
    </citation>
    <scope>SUBCELLULAR LOCATION</scope>
    <scope>INDUCTION</scope>
</reference>
<reference key="3">
    <citation type="journal article" date="2014" name="J. Cell Sci.">
        <title>The conserved ciliary protein Bug22 controls planar beating of Chlamydomonas flagella.</title>
        <authorList>
            <person name="Meng D."/>
            <person name="Cao M."/>
            <person name="Oda T."/>
            <person name="Pan J."/>
        </authorList>
    </citation>
    <scope>FUNCTION</scope>
    <scope>SUBCELLULAR LOCATION</scope>
    <scope>DISRUPTION PHENOTYPE</scope>
    <scope>IDENTIFICATION BY MASS SPECTROMETRY</scope>
</reference>
<reference key="4">
    <citation type="journal article" date="2014" name="Mol. Biol. Cell">
        <title>FAP20 is an inner junction protein of doublet microtubules essential for both the planar asymmetrical waveform and stability of flagella in Chlamydomonas.</title>
        <authorList>
            <person name="Yanagisawa H.A."/>
            <person name="Mathis G."/>
            <person name="Oda T."/>
            <person name="Hirono M."/>
            <person name="Richey E.A."/>
            <person name="Ishikawa H."/>
            <person name="Marshall W.F."/>
            <person name="Kikkawa M."/>
            <person name="Qin H."/>
        </authorList>
    </citation>
    <scope>FUNCTION</scope>
    <scope>SUBCELLULAR LOCATION</scope>
    <scope>DISRUPTION PHENOTYPE</scope>
</reference>
<feature type="chain" id="PRO_0000430499" description="Cilia- and flagella-associated protein 20">
    <location>
        <begin position="1"/>
        <end position="190"/>
    </location>
</feature>
<keyword id="KW-0002">3D-structure</keyword>
<keyword id="KW-0966">Cell projection</keyword>
<keyword id="KW-0969">Cilium</keyword>
<keyword id="KW-0963">Cytoplasm</keyword>
<keyword id="KW-0206">Cytoskeleton</keyword>
<keyword id="KW-0282">Flagellum</keyword>
<keyword id="KW-0493">Microtubule</keyword>
<comment type="function">
    <text evidence="3 4">Cilium- and flagellum-specific protein that plays a role in axonemal structure organization and motility (PubMed:24259666, PubMed:24574454). Involved in the control of flagellar beating in an asymmetric and planar waveform (PubMed:24259666, PubMed:24574454). Stabilizes outer doublet microtubules (DMTs) of the axoneme and may work as a scaffold for intratubular proteins, such as tektin and PACRG, to produce the beak structures in DMT1, 5 and 6 (PubMed:24259666, PubMed:24574454). Not essential for flagellar assembly (PubMed:24574454).</text>
</comment>
<comment type="subcellular location">
    <subcellularLocation>
        <location evidence="1">Cytoplasm</location>
        <location evidence="1">Cytoskeleton</location>
        <location evidence="1">Flagellum axoneme</location>
    </subcellularLocation>
    <subcellularLocation>
        <location>Cytoplasm</location>
        <location>Cytoskeleton</location>
        <location>Flagellum basal body</location>
    </subcellularLocation>
    <text>Localizes predominantly along the length of all nine axonemal outer doublet microtubules (DMTs). Localizes to the inner junction (IJ) between A- and B-tubules of the DMTs. Associates to the basal bodies in a microtubule-dependent manner. Enters into the flagella through diffusion.</text>
</comment>
<comment type="induction">
    <text evidence="2">Up-regulated during flagellar assembly.</text>
</comment>
<comment type="disruption phenotype">
    <text evidence="3 4">Exhibit erratic movements with cells continuously turning around the body axis. Display longer and sharp kinks flagella. Flagella beat in a uncoordinated and deformed non-planar manner. Lost beak-like strucure projections in B-tubules of the outer doublet microtubules (DMTs) 1, 5 and 6.</text>
</comment>
<comment type="similarity">
    <text evidence="5">Belongs to the CFAP20 family.</text>
</comment>
<gene>
    <name type="primary">CFAP20</name>
    <name type="synonym">BUG22</name>
    <name type="synonym">FAP20</name>
    <name type="ORF">CHLREDRAFT_189631</name>
</gene>
<dbReference type="EMBL" id="DS496123">
    <property type="protein sequence ID" value="EDP03967.1"/>
    <property type="molecule type" value="Genomic_DNA"/>
</dbReference>
<dbReference type="RefSeq" id="XP_001692489.1">
    <property type="nucleotide sequence ID" value="XM_001692437.1"/>
</dbReference>
<dbReference type="PDB" id="6U42">
    <property type="method" value="EM"/>
    <property type="resolution" value="3.40 A"/>
    <property type="chains" value="3W/3Y/4A/4C/4E/4G/4I=1-190"/>
</dbReference>
<dbReference type="PDB" id="6VE7">
    <property type="method" value="EM"/>
    <property type="resolution" value="3.60 A"/>
    <property type="chains" value="3/c/g/z=1-190"/>
</dbReference>
<dbReference type="PDB" id="8GLV">
    <property type="method" value="EM"/>
    <property type="resolution" value="3.10 A"/>
    <property type="chains" value="3W/3Y/4A/4C/4E/4G/4I/GO/GQ/GS/GU/GW/Ns/Nu/Nw=1-190"/>
</dbReference>
<dbReference type="PDBsum" id="6U42"/>
<dbReference type="PDBsum" id="6VE7"/>
<dbReference type="PDBsum" id="8GLV"/>
<dbReference type="EMDB" id="EMD-20631"/>
<dbReference type="EMDB" id="EMD-20858"/>
<dbReference type="EMDB" id="EMD-25361"/>
<dbReference type="EMDB" id="EMD-34836"/>
<dbReference type="EMDB" id="EMD-40220"/>
<dbReference type="SMR" id="A8IU92"/>
<dbReference type="PaxDb" id="3055-EDP03967"/>
<dbReference type="EnsemblPlants" id="PNW81334">
    <property type="protein sequence ID" value="PNW81334"/>
    <property type="gene ID" value="CHLRE_07g351650v5"/>
</dbReference>
<dbReference type="GeneID" id="5718073"/>
<dbReference type="Gramene" id="PNW81334">
    <property type="protein sequence ID" value="PNW81334"/>
    <property type="gene ID" value="CHLRE_07g351650v5"/>
</dbReference>
<dbReference type="KEGG" id="cre:CHLRE_07g351650v5"/>
<dbReference type="eggNOG" id="KOG3213">
    <property type="taxonomic scope" value="Eukaryota"/>
</dbReference>
<dbReference type="HOGENOM" id="CLU_060610_1_1_1"/>
<dbReference type="OrthoDB" id="7486196at2759"/>
<dbReference type="GO" id="GO:0097540">
    <property type="term" value="C:axonemal central pair"/>
    <property type="evidence" value="ECO:0000314"/>
    <property type="project" value="UniProtKB"/>
</dbReference>
<dbReference type="GO" id="GO:0097545">
    <property type="term" value="C:axonemal doublet microtubule"/>
    <property type="evidence" value="ECO:0000314"/>
    <property type="project" value="UniProtKB"/>
</dbReference>
<dbReference type="GO" id="GO:0005879">
    <property type="term" value="C:axonemal microtubule"/>
    <property type="evidence" value="ECO:0000314"/>
    <property type="project" value="UniProtKB"/>
</dbReference>
<dbReference type="GO" id="GO:0036064">
    <property type="term" value="C:ciliary basal body"/>
    <property type="evidence" value="ECO:0000314"/>
    <property type="project" value="UniProtKB"/>
</dbReference>
<dbReference type="GO" id="GO:0005875">
    <property type="term" value="C:microtubule associated complex"/>
    <property type="evidence" value="ECO:0000314"/>
    <property type="project" value="UniProtKB"/>
</dbReference>
<dbReference type="GO" id="GO:0031514">
    <property type="term" value="C:motile cilium"/>
    <property type="evidence" value="ECO:0000314"/>
    <property type="project" value="UniProtKB"/>
</dbReference>
<dbReference type="GO" id="GO:0035082">
    <property type="term" value="P:axoneme assembly"/>
    <property type="evidence" value="ECO:0000314"/>
    <property type="project" value="UniProtKB"/>
</dbReference>
<dbReference type="GO" id="GO:0060271">
    <property type="term" value="P:cilium assembly"/>
    <property type="evidence" value="ECO:0000315"/>
    <property type="project" value="UniProtKB"/>
</dbReference>
<dbReference type="GO" id="GO:0072594">
    <property type="term" value="P:establishment of protein localization to organelle"/>
    <property type="evidence" value="ECO:0000315"/>
    <property type="project" value="UniProtKB"/>
</dbReference>
<dbReference type="GO" id="GO:2000155">
    <property type="term" value="P:positive regulation of cilium-dependent cell motility"/>
    <property type="evidence" value="ECO:0000314"/>
    <property type="project" value="UniProtKB"/>
</dbReference>
<dbReference type="GO" id="GO:0060296">
    <property type="term" value="P:regulation of cilium beat frequency involved in ciliary motility"/>
    <property type="evidence" value="ECO:0000315"/>
    <property type="project" value="UniProtKB"/>
</dbReference>
<dbReference type="InterPro" id="IPR040441">
    <property type="entry name" value="CFA20/CFAP20DC"/>
</dbReference>
<dbReference type="InterPro" id="IPR007714">
    <property type="entry name" value="CFA20_dom"/>
</dbReference>
<dbReference type="PANTHER" id="PTHR12458">
    <property type="entry name" value="ORF PROTEIN"/>
    <property type="match status" value="1"/>
</dbReference>
<dbReference type="Pfam" id="PF05018">
    <property type="entry name" value="CFA20_dom"/>
    <property type="match status" value="1"/>
</dbReference>
<evidence type="ECO:0000250" key="1">
    <source>
        <dbReference type="UniProtKB" id="Q9Y6A4"/>
    </source>
</evidence>
<evidence type="ECO:0000269" key="2">
    <source>
    </source>
</evidence>
<evidence type="ECO:0000269" key="3">
    <source>
    </source>
</evidence>
<evidence type="ECO:0000269" key="4">
    <source>
    </source>
</evidence>
<evidence type="ECO:0000305" key="5"/>
<organism>
    <name type="scientific">Chlamydomonas reinhardtii</name>
    <name type="common">Chlamydomonas smithii</name>
    <dbReference type="NCBI Taxonomy" id="3055"/>
    <lineage>
        <taxon>Eukaryota</taxon>
        <taxon>Viridiplantae</taxon>
        <taxon>Chlorophyta</taxon>
        <taxon>core chlorophytes</taxon>
        <taxon>Chlorophyceae</taxon>
        <taxon>CS clade</taxon>
        <taxon>Chlamydomonadales</taxon>
        <taxon>Chlamydomonadaceae</taxon>
        <taxon>Chlamydomonas</taxon>
    </lineage>
</organism>
<name>CFA20_CHLRE</name>
<proteinExistence type="evidence at protein level"/>
<sequence length="190" mass="22166">MFKNAFQSGFLSVLYSIGSKPLEIWDKQVSNGHIKRITDADIQSSVLEIMGQNVSTTYITCPADPNKTLGIKLPFLVLIIKNLNKYFSFEVQVLDDKNVRRRFRASNYQSTTRVKPFICTMPMRLDSGWNQIQFNLSDFTRRAYGTNYIETLRVQVHANCRIRRIYFSDRLYSEEELPAEFKLFLPIQKS</sequence>
<accession>A8IU92</accession>